<evidence type="ECO:0000250" key="1"/>
<evidence type="ECO:0000305" key="2"/>
<dbReference type="EMBL" id="U28219">
    <property type="protein sequence ID" value="AAB61251.1"/>
    <property type="molecule type" value="Genomic_DNA"/>
</dbReference>
<dbReference type="EMBL" id="AE000520">
    <property type="protein sequence ID" value="AAC65692.1"/>
    <property type="molecule type" value="Genomic_DNA"/>
</dbReference>
<dbReference type="PIR" id="C71292">
    <property type="entry name" value="C71292"/>
</dbReference>
<dbReference type="RefSeq" id="WP_010882172.1">
    <property type="nucleotide sequence ID" value="NC_021490.2"/>
</dbReference>
<dbReference type="SMR" id="O07884"/>
<dbReference type="IntAct" id="O07884">
    <property type="interactions" value="7"/>
</dbReference>
<dbReference type="STRING" id="243276.TP_0727"/>
<dbReference type="EnsemblBacteria" id="AAC65692">
    <property type="protein sequence ID" value="AAC65692"/>
    <property type="gene ID" value="TP_0727"/>
</dbReference>
<dbReference type="GeneID" id="93876495"/>
<dbReference type="KEGG" id="tpa:TP_0727"/>
<dbReference type="KEGG" id="tpw:TPANIC_0727"/>
<dbReference type="eggNOG" id="COG1749">
    <property type="taxonomic scope" value="Bacteria"/>
</dbReference>
<dbReference type="HOGENOM" id="CLU_013687_2_4_12"/>
<dbReference type="OrthoDB" id="9804559at2"/>
<dbReference type="Proteomes" id="UP000000811">
    <property type="component" value="Chromosome"/>
</dbReference>
<dbReference type="GO" id="GO:0009425">
    <property type="term" value="C:bacterial-type flagellum basal body"/>
    <property type="evidence" value="ECO:0007669"/>
    <property type="project" value="UniProtKB-SubCell"/>
</dbReference>
<dbReference type="GO" id="GO:0009424">
    <property type="term" value="C:bacterial-type flagellum hook"/>
    <property type="evidence" value="ECO:0007669"/>
    <property type="project" value="TreeGrafter"/>
</dbReference>
<dbReference type="GO" id="GO:0005829">
    <property type="term" value="C:cytosol"/>
    <property type="evidence" value="ECO:0007669"/>
    <property type="project" value="TreeGrafter"/>
</dbReference>
<dbReference type="GO" id="GO:0071978">
    <property type="term" value="P:bacterial-type flagellum-dependent swarming motility"/>
    <property type="evidence" value="ECO:0007669"/>
    <property type="project" value="TreeGrafter"/>
</dbReference>
<dbReference type="Gene3D" id="2.60.98.20">
    <property type="entry name" value="Flagellar hook protein FlgE"/>
    <property type="match status" value="1"/>
</dbReference>
<dbReference type="InterPro" id="IPR037058">
    <property type="entry name" value="Falgellar_hook_FlgE_sf"/>
</dbReference>
<dbReference type="InterPro" id="IPR001444">
    <property type="entry name" value="Flag_bb_rod_N"/>
</dbReference>
<dbReference type="InterPro" id="IPR019776">
    <property type="entry name" value="Flagellar_basal_body_rod_CS"/>
</dbReference>
<dbReference type="InterPro" id="IPR020013">
    <property type="entry name" value="Flagellar_FlgE/F/G"/>
</dbReference>
<dbReference type="InterPro" id="IPR010930">
    <property type="entry name" value="Flg_bb/hook_C_dom"/>
</dbReference>
<dbReference type="InterPro" id="IPR037925">
    <property type="entry name" value="FlgE/F/G-like"/>
</dbReference>
<dbReference type="InterPro" id="IPR011491">
    <property type="entry name" value="FlgE_D2"/>
</dbReference>
<dbReference type="InterPro" id="IPR053967">
    <property type="entry name" value="LlgE_F_G-like_D1"/>
</dbReference>
<dbReference type="NCBIfam" id="TIGR03506">
    <property type="entry name" value="FlgEFG_subfam"/>
    <property type="match status" value="1"/>
</dbReference>
<dbReference type="NCBIfam" id="NF004241">
    <property type="entry name" value="PRK05682.1-5"/>
    <property type="match status" value="1"/>
</dbReference>
<dbReference type="PANTHER" id="PTHR30435:SF1">
    <property type="entry name" value="FLAGELLAR HOOK PROTEIN FLGE"/>
    <property type="match status" value="1"/>
</dbReference>
<dbReference type="PANTHER" id="PTHR30435">
    <property type="entry name" value="FLAGELLAR PROTEIN"/>
    <property type="match status" value="1"/>
</dbReference>
<dbReference type="Pfam" id="PF00460">
    <property type="entry name" value="Flg_bb_rod"/>
    <property type="match status" value="1"/>
</dbReference>
<dbReference type="Pfam" id="PF06429">
    <property type="entry name" value="Flg_bbr_C"/>
    <property type="match status" value="1"/>
</dbReference>
<dbReference type="Pfam" id="PF07559">
    <property type="entry name" value="FlgE_D2"/>
    <property type="match status" value="1"/>
</dbReference>
<dbReference type="Pfam" id="PF22692">
    <property type="entry name" value="LlgE_F_G_D1"/>
    <property type="match status" value="1"/>
</dbReference>
<dbReference type="SUPFAM" id="SSF117143">
    <property type="entry name" value="Flagellar hook protein flgE"/>
    <property type="match status" value="1"/>
</dbReference>
<dbReference type="PROSITE" id="PS00588">
    <property type="entry name" value="FLAGELLA_BB_ROD"/>
    <property type="match status" value="1"/>
</dbReference>
<sequence>MMRSLFSGVSGMQNHQTRMDVIGNNVANVNTTGFKRGRVNFQDLISQQLSAAARPNEEVGGVNPKEVGLGVLIASIDTVHTQGALQTTGINTDVSIQGSGFFVLKSGEKTFFTRAGAFGVDNAGTLVNPANGMRVQGWMAQDVAGERLINSSAQTQDLVIPIGQKIDAQQTSTVHYACNLDKRLPELAADANEADVRKSTWTTDFQVYDSFGQQHTLQINFSRVPGTNNQWQATVAVDPGTEVDTQTRVGVGTSDGAANTFIVNFDNFGHLASVTDTAGNVTGPTGQVLLEASYDVVGANPDDAGQVTRHAFTLNLGEIGTARNTITQFAERSTTKAYRQDGYAMGYLENFKIDQSGVITGVYSNGVSQDIGQLALAGFANQGGLEKAGENTYVQSNNSGIANISTSGVMGKGKLIAGTLEMSNVDLTDQFTDMIITQKGFQAGAKTIQTSDTMLDTVLSLKR</sequence>
<feature type="chain" id="PRO_0000180832" description="Flagellar hook protein FlgE">
    <location>
        <begin position="1"/>
        <end position="463"/>
    </location>
</feature>
<reference key="1">
    <citation type="journal article" date="1996" name="J. Bacteriol.">
        <title>Organization, transcription, and expression of the 5' region of the fla operon of Treponema phagedenis and Treponema pallidum.</title>
        <authorList>
            <person name="Limberger R.J."/>
            <person name="Slivienski L.L."/>
            <person name="El-Afandi M.C.T."/>
            <person name="Dantuono L.A."/>
        </authorList>
    </citation>
    <scope>NUCLEOTIDE SEQUENCE [GENOMIC DNA]</scope>
</reference>
<reference key="2">
    <citation type="journal article" date="1998" name="Science">
        <title>Complete genome sequence of Treponema pallidum, the syphilis spirochete.</title>
        <authorList>
            <person name="Fraser C.M."/>
            <person name="Norris S.J."/>
            <person name="Weinstock G.M."/>
            <person name="White O."/>
            <person name="Sutton G.G."/>
            <person name="Dodson R.J."/>
            <person name="Gwinn M.L."/>
            <person name="Hickey E.K."/>
            <person name="Clayton R.A."/>
            <person name="Ketchum K.A."/>
            <person name="Sodergren E."/>
            <person name="Hardham J.M."/>
            <person name="McLeod M.P."/>
            <person name="Salzberg S.L."/>
            <person name="Peterson J.D."/>
            <person name="Khalak H.G."/>
            <person name="Richardson D.L."/>
            <person name="Howell J.K."/>
            <person name="Chidambaram M."/>
            <person name="Utterback T.R."/>
            <person name="McDonald L.A."/>
            <person name="Artiach P."/>
            <person name="Bowman C."/>
            <person name="Cotton M.D."/>
            <person name="Fujii C."/>
            <person name="Garland S.A."/>
            <person name="Hatch B."/>
            <person name="Horst K."/>
            <person name="Roberts K.M."/>
            <person name="Sandusky M."/>
            <person name="Weidman J.F."/>
            <person name="Smith H.O."/>
            <person name="Venter J.C."/>
        </authorList>
    </citation>
    <scope>NUCLEOTIDE SEQUENCE [LARGE SCALE GENOMIC DNA]</scope>
    <source>
        <strain>Nichols</strain>
    </source>
</reference>
<proteinExistence type="inferred from homology"/>
<name>FLGE_TREPA</name>
<accession>O07884</accession>
<comment type="subcellular location">
    <subcellularLocation>
        <location evidence="1">Bacterial flagellum basal body</location>
    </subcellularLocation>
</comment>
<comment type="similarity">
    <text evidence="2">Belongs to the flagella basal body rod proteins family.</text>
</comment>
<keyword id="KW-0975">Bacterial flagellum</keyword>
<keyword id="KW-1185">Reference proteome</keyword>
<organism>
    <name type="scientific">Treponema pallidum (strain Nichols)</name>
    <dbReference type="NCBI Taxonomy" id="243276"/>
    <lineage>
        <taxon>Bacteria</taxon>
        <taxon>Pseudomonadati</taxon>
        <taxon>Spirochaetota</taxon>
        <taxon>Spirochaetia</taxon>
        <taxon>Spirochaetales</taxon>
        <taxon>Treponemataceae</taxon>
        <taxon>Treponema</taxon>
    </lineage>
</organism>
<protein>
    <recommendedName>
        <fullName>Flagellar hook protein FlgE</fullName>
    </recommendedName>
</protein>
<gene>
    <name type="primary">flgE</name>
    <name type="ordered locus">TP_0727</name>
</gene>